<comment type="function">
    <text evidence="3">Catalyzes the phosphorylation of (R)-mevalonate 5-phosphate (MVAP) to (R)-mevalonate 5-diphosphate (MVAPP). Functions in the mevalonate (MVA) pathway leading to isopentenyl diphosphate (IPP), a key precursor for the biosynthesis of isoprenoid compounds.</text>
</comment>
<comment type="catalytic activity">
    <reaction evidence="3">
        <text>(R)-5-phosphomevalonate + ATP = (R)-5-diphosphomevalonate + ADP</text>
        <dbReference type="Rhea" id="RHEA:16341"/>
        <dbReference type="ChEBI" id="CHEBI:30616"/>
        <dbReference type="ChEBI" id="CHEBI:57557"/>
        <dbReference type="ChEBI" id="CHEBI:58146"/>
        <dbReference type="ChEBI" id="CHEBI:456216"/>
        <dbReference type="EC" id="2.7.4.2"/>
    </reaction>
</comment>
<comment type="cofactor">
    <cofactor evidence="1">
        <name>Mg(2+)</name>
        <dbReference type="ChEBI" id="CHEBI:18420"/>
    </cofactor>
</comment>
<comment type="pathway">
    <text evidence="2">Isoprenoid biosynthesis; isopentenyl diphosphate biosynthesis via mevalonate pathway; isopentenyl diphosphate from (R)-mevalonate: step 2/3.</text>
</comment>
<comment type="subunit">
    <text evidence="1">Homodimer.</text>
</comment>
<comment type="similarity">
    <text evidence="4">Belongs to the GHMP kinase family.</text>
</comment>
<feature type="chain" id="PRO_0000429456" description="Phosphomevalonate kinase">
    <location>
        <begin position="1"/>
        <end position="374"/>
    </location>
</feature>
<protein>
    <recommendedName>
        <fullName>Phosphomevalonate kinase</fullName>
        <shortName>PMK</shortName>
        <ecNumber>2.7.4.2</ecNumber>
    </recommendedName>
</protein>
<dbReference type="EC" id="2.7.4.2"/>
<dbReference type="EMBL" id="AB037666">
    <property type="protein sequence ID" value="BAB07792.1"/>
    <property type="molecule type" value="Genomic_DNA"/>
</dbReference>
<dbReference type="SMR" id="Q9KWG3"/>
<dbReference type="UniPathway" id="UPA00057">
    <property type="reaction ID" value="UER00099"/>
</dbReference>
<dbReference type="GO" id="GO:0005524">
    <property type="term" value="F:ATP binding"/>
    <property type="evidence" value="ECO:0007669"/>
    <property type="project" value="UniProtKB-KW"/>
</dbReference>
<dbReference type="GO" id="GO:0004631">
    <property type="term" value="F:phosphomevalonate kinase activity"/>
    <property type="evidence" value="ECO:0007669"/>
    <property type="project" value="UniProtKB-EC"/>
</dbReference>
<dbReference type="GO" id="GO:0019287">
    <property type="term" value="P:isopentenyl diphosphate biosynthetic process, mevalonate pathway"/>
    <property type="evidence" value="ECO:0007669"/>
    <property type="project" value="UniProtKB-UniPathway"/>
</dbReference>
<dbReference type="Gene3D" id="3.30.230.10">
    <property type="match status" value="1"/>
</dbReference>
<dbReference type="Gene3D" id="3.30.70.890">
    <property type="entry name" value="GHMP kinase, C-terminal domain"/>
    <property type="match status" value="1"/>
</dbReference>
<dbReference type="InterPro" id="IPR013750">
    <property type="entry name" value="GHMP_kinase_C_dom"/>
</dbReference>
<dbReference type="InterPro" id="IPR036554">
    <property type="entry name" value="GHMP_kinase_C_sf"/>
</dbReference>
<dbReference type="InterPro" id="IPR006204">
    <property type="entry name" value="GHMP_kinase_N_dom"/>
</dbReference>
<dbReference type="InterPro" id="IPR035102">
    <property type="entry name" value="Phosphomevalonate_kinase"/>
</dbReference>
<dbReference type="InterPro" id="IPR005917">
    <property type="entry name" value="Pmev_kinase_bact"/>
</dbReference>
<dbReference type="InterPro" id="IPR020568">
    <property type="entry name" value="Ribosomal_Su5_D2-typ_SF"/>
</dbReference>
<dbReference type="InterPro" id="IPR014721">
    <property type="entry name" value="Ribsml_uS5_D2-typ_fold_subgr"/>
</dbReference>
<dbReference type="NCBIfam" id="TIGR01220">
    <property type="entry name" value="Pmev_kin_Gr_pos"/>
    <property type="match status" value="1"/>
</dbReference>
<dbReference type="PANTHER" id="PTHR31814">
    <property type="match status" value="1"/>
</dbReference>
<dbReference type="PANTHER" id="PTHR31814:SF2">
    <property type="entry name" value="PHOSPHOMEVALONATE KINASE"/>
    <property type="match status" value="1"/>
</dbReference>
<dbReference type="Pfam" id="PF08544">
    <property type="entry name" value="GHMP_kinases_C"/>
    <property type="match status" value="1"/>
</dbReference>
<dbReference type="Pfam" id="PF00288">
    <property type="entry name" value="GHMP_kinases_N"/>
    <property type="match status" value="1"/>
</dbReference>
<dbReference type="PRINTS" id="PR00959">
    <property type="entry name" value="MEVGALKINASE"/>
</dbReference>
<dbReference type="SUPFAM" id="SSF55060">
    <property type="entry name" value="GHMP Kinase, C-terminal domain"/>
    <property type="match status" value="1"/>
</dbReference>
<dbReference type="SUPFAM" id="SSF54211">
    <property type="entry name" value="Ribosomal protein S5 domain 2-like"/>
    <property type="match status" value="1"/>
</dbReference>
<reference key="1">
    <citation type="journal article" date="2000" name="J. Bacteriol.">
        <title>A gene cluster for the mevalonate pathway from Streptomyces sp. strain CL190.</title>
        <authorList>
            <person name="Takagi M."/>
            <person name="Kuzuyama T."/>
            <person name="Takahashi S."/>
            <person name="Seto H."/>
        </authorList>
    </citation>
    <scope>NUCLEOTIDE SEQUENCE [GENOMIC DNA]</scope>
    <scope>PATHWAY</scope>
    <source>
        <strain>CL190</strain>
    </source>
</reference>
<reference key="2">
    <citation type="journal article" date="2013" name="J. Biochem.">
        <title>Biochemical evidence supporting the presence of the classical mevalonate pathway in the thermoacidophilic archaeon Sulfolobus solfataricus.</title>
        <authorList>
            <person name="Nishimura H."/>
            <person name="Azami Y."/>
            <person name="Miyagawa M."/>
            <person name="Hashimoto C."/>
            <person name="Yoshimura T."/>
            <person name="Hemmi H."/>
        </authorList>
    </citation>
    <scope>FUNCTION</scope>
    <scope>CATALYTIC ACTIVITY</scope>
    <source>
        <strain>CL190</strain>
    </source>
</reference>
<sequence>MTTGQRTIVRHAPGKLFVAGEYAVVDPGNPAILVAVDRHISVTVSDADADTGAADVVISSDLGPQAVGWRWHDGRLVVRDPDDGQQARSALAHVVSAIETVGRLLGERGQKVPALTLSVSSRLHEDGRKFGLGSSGAVTVATVAAVAAFCGLELSTDERFRLAMLATAELDPKGSGGDLAASTWGGWIAYQAPDRAFVLDLARRVGVDRTLKAPWPGHSVRRLPAPKGLTLEVGWTGEPASTASLVSDLHRRTWRGSASHQRFVETTTDCVRSAVTALESGDDTSLLHEIRRARQELARLDDEVGLGIFTPKLTALCDAAEAVGGAAKPSGAGGGDCGIALLDAEASRDITHVRQRWETAGVLPLPLTPALEGI</sequence>
<organism>
    <name type="scientific">Streptomyces sp. (strain CL190)</name>
    <dbReference type="NCBI Taxonomy" id="93372"/>
    <lineage>
        <taxon>Bacteria</taxon>
        <taxon>Bacillati</taxon>
        <taxon>Actinomycetota</taxon>
        <taxon>Actinomycetes</taxon>
        <taxon>Kitasatosporales</taxon>
        <taxon>Streptomycetaceae</taxon>
        <taxon>Streptomyces</taxon>
    </lineage>
</organism>
<proteinExistence type="evidence at protein level"/>
<evidence type="ECO:0000250" key="1"/>
<evidence type="ECO:0000269" key="2">
    <source>
    </source>
</evidence>
<evidence type="ECO:0000269" key="3">
    <source>
    </source>
</evidence>
<evidence type="ECO:0000305" key="4"/>
<accession>Q9KWG3</accession>
<name>PMK_STRC1</name>
<keyword id="KW-0067">ATP-binding</keyword>
<keyword id="KW-0414">Isoprene biosynthesis</keyword>
<keyword id="KW-0418">Kinase</keyword>
<keyword id="KW-0460">Magnesium</keyword>
<keyword id="KW-0547">Nucleotide-binding</keyword>
<keyword id="KW-0808">Transferase</keyword>